<protein>
    <recommendedName>
        <fullName>1-(5-phosphoribosyl)-5-[(5-phosphoribosylamino)methylideneamino] imidazole-4-carboxamide isomerase</fullName>
        <ecNumber>5.3.1.16</ecNumber>
    </recommendedName>
    <alternativeName>
        <fullName>Phosphoribosylformimino-5-aminoimidazole carboxamide ribotide isomerase</fullName>
    </alternativeName>
</protein>
<name>HIS4_RHIME</name>
<keyword id="KW-0028">Amino-acid biosynthesis</keyword>
<keyword id="KW-0963">Cytoplasm</keyword>
<keyword id="KW-0368">Histidine biosynthesis</keyword>
<keyword id="KW-0413">Isomerase</keyword>
<keyword id="KW-1185">Reference proteome</keyword>
<feature type="chain" id="PRO_0000142043" description="1-(5-phosphoribosyl)-5-[(5-phosphoribosylamino)methylideneamino] imidazole-4-carboxamide isomerase">
    <location>
        <begin position="1"/>
        <end position="247"/>
    </location>
</feature>
<feature type="active site" description="Proton acceptor" evidence="1">
    <location>
        <position position="8"/>
    </location>
</feature>
<feature type="active site" description="Proton donor" evidence="1">
    <location>
        <position position="129"/>
    </location>
</feature>
<accession>Q92TB2</accession>
<comment type="catalytic activity">
    <reaction>
        <text>1-(5-phospho-beta-D-ribosyl)-5-[(5-phospho-beta-D-ribosylamino)methylideneamino]imidazole-4-carboxamide = 5-[(5-phospho-1-deoxy-D-ribulos-1-ylimino)methylamino]-1-(5-phospho-beta-D-ribosyl)imidazole-4-carboxamide</text>
        <dbReference type="Rhea" id="RHEA:15469"/>
        <dbReference type="ChEBI" id="CHEBI:58435"/>
        <dbReference type="ChEBI" id="CHEBI:58525"/>
        <dbReference type="EC" id="5.3.1.16"/>
    </reaction>
</comment>
<comment type="pathway">
    <text>Amino-acid biosynthesis; L-histidine biosynthesis; L-histidine from 5-phospho-alpha-D-ribose 1-diphosphate: step 4/9.</text>
</comment>
<comment type="subcellular location">
    <subcellularLocation>
        <location evidence="1">Cytoplasm</location>
    </subcellularLocation>
</comment>
<comment type="similarity">
    <text evidence="2">Belongs to the HisA/HisF family.</text>
</comment>
<organism>
    <name type="scientific">Rhizobium meliloti (strain 1021)</name>
    <name type="common">Ensifer meliloti</name>
    <name type="synonym">Sinorhizobium meliloti</name>
    <dbReference type="NCBI Taxonomy" id="266834"/>
    <lineage>
        <taxon>Bacteria</taxon>
        <taxon>Pseudomonadati</taxon>
        <taxon>Pseudomonadota</taxon>
        <taxon>Alphaproteobacteria</taxon>
        <taxon>Hyphomicrobiales</taxon>
        <taxon>Rhizobiaceae</taxon>
        <taxon>Sinorhizobium/Ensifer group</taxon>
        <taxon>Sinorhizobium</taxon>
    </lineage>
</organism>
<reference key="1">
    <citation type="journal article" date="2001" name="Proc. Natl. Acad. Sci. U.S.A.">
        <title>Analysis of the chromosome sequence of the legume symbiont Sinorhizobium meliloti strain 1021.</title>
        <authorList>
            <person name="Capela D."/>
            <person name="Barloy-Hubler F."/>
            <person name="Gouzy J."/>
            <person name="Bothe G."/>
            <person name="Ampe F."/>
            <person name="Batut J."/>
            <person name="Boistard P."/>
            <person name="Becker A."/>
            <person name="Boutry M."/>
            <person name="Cadieu E."/>
            <person name="Dreano S."/>
            <person name="Gloux S."/>
            <person name="Godrie T."/>
            <person name="Goffeau A."/>
            <person name="Kahn D."/>
            <person name="Kiss E."/>
            <person name="Lelaure V."/>
            <person name="Masuy D."/>
            <person name="Pohl T."/>
            <person name="Portetelle D."/>
            <person name="Puehler A."/>
            <person name="Purnelle B."/>
            <person name="Ramsperger U."/>
            <person name="Renard C."/>
            <person name="Thebault P."/>
            <person name="Vandenbol M."/>
            <person name="Weidner S."/>
            <person name="Galibert F."/>
        </authorList>
    </citation>
    <scope>NUCLEOTIDE SEQUENCE [LARGE SCALE GENOMIC DNA]</scope>
    <source>
        <strain>1021</strain>
    </source>
</reference>
<reference key="2">
    <citation type="journal article" date="2001" name="Science">
        <title>The composite genome of the legume symbiont Sinorhizobium meliloti.</title>
        <authorList>
            <person name="Galibert F."/>
            <person name="Finan T.M."/>
            <person name="Long S.R."/>
            <person name="Puehler A."/>
            <person name="Abola P."/>
            <person name="Ampe F."/>
            <person name="Barloy-Hubler F."/>
            <person name="Barnett M.J."/>
            <person name="Becker A."/>
            <person name="Boistard P."/>
            <person name="Bothe G."/>
            <person name="Boutry M."/>
            <person name="Bowser L."/>
            <person name="Buhrmester J."/>
            <person name="Cadieu E."/>
            <person name="Capela D."/>
            <person name="Chain P."/>
            <person name="Cowie A."/>
            <person name="Davis R.W."/>
            <person name="Dreano S."/>
            <person name="Federspiel N.A."/>
            <person name="Fisher R.F."/>
            <person name="Gloux S."/>
            <person name="Godrie T."/>
            <person name="Goffeau A."/>
            <person name="Golding B."/>
            <person name="Gouzy J."/>
            <person name="Gurjal M."/>
            <person name="Hernandez-Lucas I."/>
            <person name="Hong A."/>
            <person name="Huizar L."/>
            <person name="Hyman R.W."/>
            <person name="Jones T."/>
            <person name="Kahn D."/>
            <person name="Kahn M.L."/>
            <person name="Kalman S."/>
            <person name="Keating D.H."/>
            <person name="Kiss E."/>
            <person name="Komp C."/>
            <person name="Lelaure V."/>
            <person name="Masuy D."/>
            <person name="Palm C."/>
            <person name="Peck M.C."/>
            <person name="Pohl T.M."/>
            <person name="Portetelle D."/>
            <person name="Purnelle B."/>
            <person name="Ramsperger U."/>
            <person name="Surzycki R."/>
            <person name="Thebault P."/>
            <person name="Vandenbol M."/>
            <person name="Vorhoelter F.J."/>
            <person name="Weidner S."/>
            <person name="Wells D.H."/>
            <person name="Wong K."/>
            <person name="Yeh K.-C."/>
            <person name="Batut J."/>
        </authorList>
    </citation>
    <scope>NUCLEOTIDE SEQUENCE [LARGE SCALE GENOMIC DNA]</scope>
    <source>
        <strain>1021</strain>
    </source>
</reference>
<gene>
    <name type="primary">hisA</name>
    <name type="ordered locus">R00052</name>
    <name type="ORF">SMc02570</name>
</gene>
<proteinExistence type="inferred from homology"/>
<sequence>MILFPAIDLKDGQCVRLKLGDMEQATVYNPDPAAQARAFEEQGFEWLHVVDLNGAFAGETVNGAAVDAILKATKNPVQLGGGIRTLEHIENWLSRGLKRVILGTVAVRDPALVIEACRKFPGRVAVGIDAKGGKVAVEGWAEASELGVVELARKFEGAGVAAIIYTDIDRDGILTGINWASTLELADAVSIPVIASGGLASMDDIRRMTEPDAQKLEGAISGRALYDGRIDPKEALDLIREARKGKL</sequence>
<evidence type="ECO:0000250" key="1"/>
<evidence type="ECO:0000305" key="2"/>
<dbReference type="EC" id="5.3.1.16"/>
<dbReference type="EMBL" id="AL591688">
    <property type="protein sequence ID" value="CAC41439.1"/>
    <property type="molecule type" value="Genomic_DNA"/>
</dbReference>
<dbReference type="RefSeq" id="NP_384158.1">
    <property type="nucleotide sequence ID" value="NC_003047.1"/>
</dbReference>
<dbReference type="RefSeq" id="WP_003531989.1">
    <property type="nucleotide sequence ID" value="NC_003047.1"/>
</dbReference>
<dbReference type="SMR" id="Q92TB2"/>
<dbReference type="EnsemblBacteria" id="CAC41439">
    <property type="protein sequence ID" value="CAC41439"/>
    <property type="gene ID" value="SMc02570"/>
</dbReference>
<dbReference type="KEGG" id="sme:SMc02570"/>
<dbReference type="PATRIC" id="fig|266834.11.peg.1406"/>
<dbReference type="eggNOG" id="COG0106">
    <property type="taxonomic scope" value="Bacteria"/>
</dbReference>
<dbReference type="HOGENOM" id="CLU_048577_1_1_5"/>
<dbReference type="OrthoDB" id="9807749at2"/>
<dbReference type="UniPathway" id="UPA00031">
    <property type="reaction ID" value="UER00009"/>
</dbReference>
<dbReference type="Proteomes" id="UP000001976">
    <property type="component" value="Chromosome"/>
</dbReference>
<dbReference type="GO" id="GO:0005737">
    <property type="term" value="C:cytoplasm"/>
    <property type="evidence" value="ECO:0007669"/>
    <property type="project" value="UniProtKB-SubCell"/>
</dbReference>
<dbReference type="GO" id="GO:0003949">
    <property type="term" value="F:1-(5-phosphoribosyl)-5-[(5-phosphoribosylamino)methylideneamino]imidazole-4-carboxamide isomerase activity"/>
    <property type="evidence" value="ECO:0007669"/>
    <property type="project" value="UniProtKB-UniRule"/>
</dbReference>
<dbReference type="GO" id="GO:0000105">
    <property type="term" value="P:L-histidine biosynthetic process"/>
    <property type="evidence" value="ECO:0007669"/>
    <property type="project" value="UniProtKB-UniRule"/>
</dbReference>
<dbReference type="GO" id="GO:0000162">
    <property type="term" value="P:L-tryptophan biosynthetic process"/>
    <property type="evidence" value="ECO:0007669"/>
    <property type="project" value="TreeGrafter"/>
</dbReference>
<dbReference type="CDD" id="cd04732">
    <property type="entry name" value="HisA"/>
    <property type="match status" value="1"/>
</dbReference>
<dbReference type="FunFam" id="3.20.20.70:FF:000009">
    <property type="entry name" value="1-(5-phosphoribosyl)-5-[(5-phosphoribosylamino)methylideneamino] imidazole-4-carboxamide isomerase"/>
    <property type="match status" value="1"/>
</dbReference>
<dbReference type="Gene3D" id="3.20.20.70">
    <property type="entry name" value="Aldolase class I"/>
    <property type="match status" value="1"/>
</dbReference>
<dbReference type="HAMAP" id="MF_01014">
    <property type="entry name" value="HisA"/>
    <property type="match status" value="1"/>
</dbReference>
<dbReference type="InterPro" id="IPR013785">
    <property type="entry name" value="Aldolase_TIM"/>
</dbReference>
<dbReference type="InterPro" id="IPR006062">
    <property type="entry name" value="His_biosynth"/>
</dbReference>
<dbReference type="InterPro" id="IPR006063">
    <property type="entry name" value="HisA_bact_arch"/>
</dbReference>
<dbReference type="InterPro" id="IPR044524">
    <property type="entry name" value="Isoase_HisA-like"/>
</dbReference>
<dbReference type="InterPro" id="IPR023016">
    <property type="entry name" value="Isoase_HisA-like_bact"/>
</dbReference>
<dbReference type="InterPro" id="IPR011060">
    <property type="entry name" value="RibuloseP-bd_barrel"/>
</dbReference>
<dbReference type="NCBIfam" id="TIGR00007">
    <property type="entry name" value="1-(5-phosphoribosyl)-5-[(5-phosphoribosylamino)methylideneamino]imidazole-4-carboxamide isomerase"/>
    <property type="match status" value="1"/>
</dbReference>
<dbReference type="PANTHER" id="PTHR43090">
    <property type="entry name" value="1-(5-PHOSPHORIBOSYL)-5-[(5-PHOSPHORIBOSYLAMINO)METHYLIDENEAMINO] IMIDAZOLE-4-CARBOXAMIDE ISOMERASE"/>
    <property type="match status" value="1"/>
</dbReference>
<dbReference type="PANTHER" id="PTHR43090:SF2">
    <property type="entry name" value="1-(5-PHOSPHORIBOSYL)-5-[(5-PHOSPHORIBOSYLAMINO)METHYLIDENEAMINO] IMIDAZOLE-4-CARBOXAMIDE ISOMERASE"/>
    <property type="match status" value="1"/>
</dbReference>
<dbReference type="Pfam" id="PF00977">
    <property type="entry name" value="His_biosynth"/>
    <property type="match status" value="1"/>
</dbReference>
<dbReference type="SUPFAM" id="SSF51366">
    <property type="entry name" value="Ribulose-phoshate binding barrel"/>
    <property type="match status" value="1"/>
</dbReference>